<sequence length="95" mass="10243">MSRRCELTGKGPMTGNNVSHANNKTRRRFLPNLNDVTLQSETLGRGVKLRISAAALRSVDHRGGLDAFLAKAKDEDLSDAALKVKKEIAKAQAAA</sequence>
<organism>
    <name type="scientific">Ruegeria pomeroyi (strain ATCC 700808 / DSM 15171 / DSS-3)</name>
    <name type="common">Silicibacter pomeroyi</name>
    <dbReference type="NCBI Taxonomy" id="246200"/>
    <lineage>
        <taxon>Bacteria</taxon>
        <taxon>Pseudomonadati</taxon>
        <taxon>Pseudomonadota</taxon>
        <taxon>Alphaproteobacteria</taxon>
        <taxon>Rhodobacterales</taxon>
        <taxon>Roseobacteraceae</taxon>
        <taxon>Ruegeria</taxon>
    </lineage>
</organism>
<dbReference type="EMBL" id="CP000031">
    <property type="protein sequence ID" value="AAV94278.1"/>
    <property type="molecule type" value="Genomic_DNA"/>
</dbReference>
<dbReference type="RefSeq" id="WP_011046722.1">
    <property type="nucleotide sequence ID" value="NC_003911.12"/>
</dbReference>
<dbReference type="SMR" id="Q5LUS9"/>
<dbReference type="STRING" id="246200.SPO0974"/>
<dbReference type="PaxDb" id="246200-SPO0974"/>
<dbReference type="KEGG" id="sil:SPO0974"/>
<dbReference type="eggNOG" id="COG0227">
    <property type="taxonomic scope" value="Bacteria"/>
</dbReference>
<dbReference type="HOGENOM" id="CLU_064548_4_2_5"/>
<dbReference type="OrthoDB" id="9805609at2"/>
<dbReference type="Proteomes" id="UP000001023">
    <property type="component" value="Chromosome"/>
</dbReference>
<dbReference type="GO" id="GO:0022625">
    <property type="term" value="C:cytosolic large ribosomal subunit"/>
    <property type="evidence" value="ECO:0007669"/>
    <property type="project" value="TreeGrafter"/>
</dbReference>
<dbReference type="GO" id="GO:0003735">
    <property type="term" value="F:structural constituent of ribosome"/>
    <property type="evidence" value="ECO:0007669"/>
    <property type="project" value="InterPro"/>
</dbReference>
<dbReference type="GO" id="GO:0006412">
    <property type="term" value="P:translation"/>
    <property type="evidence" value="ECO:0007669"/>
    <property type="project" value="UniProtKB-UniRule"/>
</dbReference>
<dbReference type="Gene3D" id="2.30.170.40">
    <property type="entry name" value="Ribosomal protein L28/L24"/>
    <property type="match status" value="1"/>
</dbReference>
<dbReference type="HAMAP" id="MF_00373">
    <property type="entry name" value="Ribosomal_bL28"/>
    <property type="match status" value="1"/>
</dbReference>
<dbReference type="InterPro" id="IPR026569">
    <property type="entry name" value="Ribosomal_bL28"/>
</dbReference>
<dbReference type="InterPro" id="IPR034704">
    <property type="entry name" value="Ribosomal_bL28/bL31-like_sf"/>
</dbReference>
<dbReference type="InterPro" id="IPR001383">
    <property type="entry name" value="Ribosomal_bL28_bact-type"/>
</dbReference>
<dbReference type="InterPro" id="IPR037147">
    <property type="entry name" value="Ribosomal_bL28_sf"/>
</dbReference>
<dbReference type="NCBIfam" id="TIGR00009">
    <property type="entry name" value="L28"/>
    <property type="match status" value="1"/>
</dbReference>
<dbReference type="PANTHER" id="PTHR13528">
    <property type="entry name" value="39S RIBOSOMAL PROTEIN L28, MITOCHONDRIAL"/>
    <property type="match status" value="1"/>
</dbReference>
<dbReference type="PANTHER" id="PTHR13528:SF2">
    <property type="entry name" value="LARGE RIBOSOMAL SUBUNIT PROTEIN BL28M"/>
    <property type="match status" value="1"/>
</dbReference>
<dbReference type="Pfam" id="PF00830">
    <property type="entry name" value="Ribosomal_L28"/>
    <property type="match status" value="1"/>
</dbReference>
<dbReference type="SUPFAM" id="SSF143800">
    <property type="entry name" value="L28p-like"/>
    <property type="match status" value="1"/>
</dbReference>
<comment type="similarity">
    <text evidence="1">Belongs to the bacterial ribosomal protein bL28 family.</text>
</comment>
<proteinExistence type="inferred from homology"/>
<evidence type="ECO:0000255" key="1">
    <source>
        <dbReference type="HAMAP-Rule" id="MF_00373"/>
    </source>
</evidence>
<evidence type="ECO:0000256" key="2">
    <source>
        <dbReference type="SAM" id="MobiDB-lite"/>
    </source>
</evidence>
<evidence type="ECO:0000305" key="3"/>
<protein>
    <recommendedName>
        <fullName evidence="1">Large ribosomal subunit protein bL28</fullName>
    </recommendedName>
    <alternativeName>
        <fullName evidence="3">50S ribosomal protein L28</fullName>
    </alternativeName>
</protein>
<accession>Q5LUS9</accession>
<reference key="1">
    <citation type="journal article" date="2004" name="Nature">
        <title>Genome sequence of Silicibacter pomeroyi reveals adaptations to the marine environment.</title>
        <authorList>
            <person name="Moran M.A."/>
            <person name="Buchan A."/>
            <person name="Gonzalez J.M."/>
            <person name="Heidelberg J.F."/>
            <person name="Whitman W.B."/>
            <person name="Kiene R.P."/>
            <person name="Henriksen J.R."/>
            <person name="King G.M."/>
            <person name="Belas R."/>
            <person name="Fuqua C."/>
            <person name="Brinkac L.M."/>
            <person name="Lewis M."/>
            <person name="Johri S."/>
            <person name="Weaver B."/>
            <person name="Pai G."/>
            <person name="Eisen J.A."/>
            <person name="Rahe E."/>
            <person name="Sheldon W.M."/>
            <person name="Ye W."/>
            <person name="Miller T.R."/>
            <person name="Carlton J."/>
            <person name="Rasko D.A."/>
            <person name="Paulsen I.T."/>
            <person name="Ren Q."/>
            <person name="Daugherty S.C."/>
            <person name="DeBoy R.T."/>
            <person name="Dodson R.J."/>
            <person name="Durkin A.S."/>
            <person name="Madupu R."/>
            <person name="Nelson W.C."/>
            <person name="Sullivan S.A."/>
            <person name="Rosovitz M.J."/>
            <person name="Haft D.H."/>
            <person name="Selengut J."/>
            <person name="Ward N."/>
        </authorList>
    </citation>
    <scope>NUCLEOTIDE SEQUENCE [LARGE SCALE GENOMIC DNA]</scope>
    <source>
        <strain>ATCC 700808 / DSM 15171 / DSS-3</strain>
    </source>
</reference>
<reference key="2">
    <citation type="journal article" date="2014" name="Stand. Genomic Sci.">
        <title>An updated genome annotation for the model marine bacterium Ruegeria pomeroyi DSS-3.</title>
        <authorList>
            <person name="Rivers A.R."/>
            <person name="Smith C.B."/>
            <person name="Moran M.A."/>
        </authorList>
    </citation>
    <scope>GENOME REANNOTATION</scope>
    <source>
        <strain>ATCC 700808 / DSM 15171 / DSS-3</strain>
    </source>
</reference>
<name>RL28_RUEPO</name>
<feature type="chain" id="PRO_0000178547" description="Large ribosomal subunit protein bL28">
    <location>
        <begin position="1"/>
        <end position="95"/>
    </location>
</feature>
<feature type="region of interest" description="Disordered" evidence="2">
    <location>
        <begin position="1"/>
        <end position="22"/>
    </location>
</feature>
<gene>
    <name evidence="1" type="primary">rpmB</name>
    <name type="ordered locus">SPO0974</name>
</gene>
<keyword id="KW-1185">Reference proteome</keyword>
<keyword id="KW-0687">Ribonucleoprotein</keyword>
<keyword id="KW-0689">Ribosomal protein</keyword>